<dbReference type="EC" id="3.1.2.-" evidence="6"/>
<dbReference type="EMBL" id="CH476604">
    <property type="protein sequence ID" value="EAU31925.1"/>
    <property type="molecule type" value="Genomic_DNA"/>
</dbReference>
<dbReference type="RefSeq" id="XP_001216284.1">
    <property type="nucleotide sequence ID" value="XM_001216284.1"/>
</dbReference>
<dbReference type="SMR" id="Q0CF71"/>
<dbReference type="STRING" id="341663.Q0CF71"/>
<dbReference type="ESTHER" id="asptn-azpb5">
    <property type="family name" value="FSH1"/>
</dbReference>
<dbReference type="EnsemblFungi" id="EAU31925">
    <property type="protein sequence ID" value="EAU31925"/>
    <property type="gene ID" value="ATEG_07663"/>
</dbReference>
<dbReference type="GeneID" id="4322608"/>
<dbReference type="VEuPathDB" id="FungiDB:ATEG_07663"/>
<dbReference type="eggNOG" id="KOG2551">
    <property type="taxonomic scope" value="Eukaryota"/>
</dbReference>
<dbReference type="HOGENOM" id="CLU_051938_0_0_1"/>
<dbReference type="OMA" id="MESNGLH"/>
<dbReference type="OrthoDB" id="414698at2759"/>
<dbReference type="Proteomes" id="UP000007963">
    <property type="component" value="Unassembled WGS sequence"/>
</dbReference>
<dbReference type="GO" id="GO:0005737">
    <property type="term" value="C:cytoplasm"/>
    <property type="evidence" value="ECO:0007669"/>
    <property type="project" value="TreeGrafter"/>
</dbReference>
<dbReference type="GO" id="GO:0005634">
    <property type="term" value="C:nucleus"/>
    <property type="evidence" value="ECO:0007669"/>
    <property type="project" value="TreeGrafter"/>
</dbReference>
<dbReference type="GO" id="GO:0016787">
    <property type="term" value="F:hydrolase activity"/>
    <property type="evidence" value="ECO:0007669"/>
    <property type="project" value="UniProtKB-KW"/>
</dbReference>
<dbReference type="GO" id="GO:0044550">
    <property type="term" value="P:secondary metabolite biosynthetic process"/>
    <property type="evidence" value="ECO:0007669"/>
    <property type="project" value="TreeGrafter"/>
</dbReference>
<dbReference type="Gene3D" id="3.40.50.1820">
    <property type="entry name" value="alpha/beta hydrolase"/>
    <property type="match status" value="1"/>
</dbReference>
<dbReference type="InterPro" id="IPR029058">
    <property type="entry name" value="AB_hydrolase_fold"/>
</dbReference>
<dbReference type="InterPro" id="IPR005645">
    <property type="entry name" value="FSH-like_dom"/>
</dbReference>
<dbReference type="InterPro" id="IPR050593">
    <property type="entry name" value="LovG"/>
</dbReference>
<dbReference type="PANTHER" id="PTHR48070:SF3">
    <property type="entry name" value="ESTERASE DBAE-RELATED"/>
    <property type="match status" value="1"/>
</dbReference>
<dbReference type="PANTHER" id="PTHR48070">
    <property type="entry name" value="ESTERASE OVCA2"/>
    <property type="match status" value="1"/>
</dbReference>
<dbReference type="Pfam" id="PF03959">
    <property type="entry name" value="FSH1"/>
    <property type="match status" value="1"/>
</dbReference>
<dbReference type="SUPFAM" id="SSF53474">
    <property type="entry name" value="alpha/beta-Hydrolases"/>
    <property type="match status" value="1"/>
</dbReference>
<sequence length="255" mass="27521">MSPPRFSGRQDGRTDPTTALPRVLCLHGGGTNARIFRTQCRVIRAHLADSFRLVFADGPFPSGPGPDVTAVYGDWGPFRAWLPHPAVKDPDVDKIDECIAAAMAADDRAGATGAWVGLLGFSQGARVAASLLLRQQRHQQRQKASLGFAYGATNAISEYRFAVLFAGRGPLLDMGAGDDNTRPEAELLELPTIHVHGLQDPGLEMHRDLLRCCLGSSARLVQWDGDHRVPIRRKDVSAVAAEIRDLASRGILGDG</sequence>
<name>AZPB5_ASPTN</name>
<accession>Q0CF71</accession>
<gene>
    <name type="ORF">ATEG_07663</name>
</gene>
<comment type="function">
    <text evidence="2 3 6">Probable esterase; part of the cluster B that mediates the biosynthesis of azasperpyranones, members of the azaphilone family that exhibit anti-cancer activities (PubMed:31908094). Azasperpyranones are synthesized by 2 clusters, A and B (PubMed:31908094). Cluster A is responsible for the production of the polyhydric phenol moiety while the azaphilonoid scaffold is produced by the cluster B (PubMed:31908094). The non-reducing polyketide synthase ATEG_03629 produces 5-methyl orsellinic acid, which is then reduced to 5-methyl orsellinic aldehyde by the NRPS-like protein ATEG_03630 (PubMed:24412543). 5-methyl orsellinic aldehyde is then first hydroxylated by the FAD-dependent monooxygenase ATEG_03635 and subsequently hydroxylated by the cytochrome P450 monooxygenase ATEG_03631 to produce the unstable polyhydric phenol precursor of azasperpyranones (PubMed:31908094). On the other hand, the polyketide synthase ATEG_07659 is responsible for producing the 3,5-dimethyloctadienone moiety from acetyl-CoA, three malonyl-CoA, and two S-adenosyl methionines (SAM) (Probable). The 3,5-dimethyloctadienone moiety is then loaded onto the SAT domain of ATEG_07661 and extended with four malonyl-CoA and one SAM, which leads to the formation of 2,4-dihydroxy-6-(5,7-dimethyl-2-oxo-trans-3-trans-5-nonadienyl)-3-methylbenzaldehyde (compound 8) after reductive release and aldol condensation (Probable). The FAD-dependent monooxygenase ATEG_07662 is the next enzyme in the biosynthesis sequence and hydroxylates the side chain at the benzylic position of compound 8 (Probable). In Aspergillus nidulans, afoF, the ortholog of the FAD-dependent oxygenase ATEG_07660, is the key enzyme for the biosynthesis of asperfuranone by catalyzing the hydroxylation at C-8 of to prevent the formation of a six-membered ring hemiacetal intermediate and thus facilitating the formation of a five-membered ring to produce asperfuranone (Probable). In Aspergillus terreus, ATEG_07660 is probably not functional, which leads to the formation of the six-membered ring hemiacetal intermediate presperpyranone instead of asperfuranone (Probable). Finally, ATEG_03636 is involved in the condensation of the polyhydric phenol moiety produced by cluster A and the perasperpyranone precursor produced by cluster B, to yield azasperpyranone A (Probable). Further modifications of azasperpyranone A result in the production of derivatives, including azasperpyranone B to F (PubMed:31908094).</text>
</comment>
<comment type="induction">
    <text evidence="3">Expression is induced by the azasperpyranone cluster A-specific transcription factor ATEG_07666 which is itself regulated by the azasperpyranone transcriptional regulator ATEG_07667.</text>
</comment>
<comment type="disruption phenotype">
    <text evidence="3">Abolishes the production of azasperpyranone A.</text>
</comment>
<comment type="biotechnology">
    <text evidence="3">Azasperpyranones display potential anti-cancer activities (PubMed:31908094). Azasperpyranones A, C, D, and F exhibit potent growth-inhibitory activity against the A549, HepG2, HCT-116, and HL-60 cell lines, with IC(50) values of 2.39-14.42 mm, respectively (PubMed:31908094). Moreover, azasperpyranone D significantly inhibits HCT-116 xenograft tumor growth in BALB/c-nu mice (PubMed:31908094). In addition, azasperpyranones A and C can bind with four kinds of therapeutic targets for cancer, eEF2K, FGFR, survivin, and TNF-a (PubMed:31908094).</text>
</comment>
<comment type="similarity">
    <text evidence="5">Belongs to the LovG family.</text>
</comment>
<evidence type="ECO:0000250" key="1">
    <source>
        <dbReference type="UniProtKB" id="P38777"/>
    </source>
</evidence>
<evidence type="ECO:0000269" key="2">
    <source>
    </source>
</evidence>
<evidence type="ECO:0000269" key="3">
    <source>
    </source>
</evidence>
<evidence type="ECO:0000303" key="4">
    <source>
    </source>
</evidence>
<evidence type="ECO:0000305" key="5"/>
<evidence type="ECO:0000305" key="6">
    <source>
    </source>
</evidence>
<proteinExistence type="evidence at protein level"/>
<feature type="chain" id="PRO_0000450091" description="Probable esterase ATEG_07663">
    <location>
        <begin position="1"/>
        <end position="255"/>
    </location>
</feature>
<feature type="active site" description="Charge relay system" evidence="1">
    <location>
        <position position="122"/>
    </location>
</feature>
<feature type="active site" description="Charge relay system" evidence="1">
    <location>
        <position position="200"/>
    </location>
</feature>
<feature type="active site" description="Charge relay system" evidence="1">
    <location>
        <position position="227"/>
    </location>
</feature>
<protein>
    <recommendedName>
        <fullName evidence="4">Probable esterase ATEG_07663</fullName>
        <ecNumber evidence="6">3.1.2.-</ecNumber>
    </recommendedName>
    <alternativeName>
        <fullName evidence="4">Azasperpyranone A biosynthesis cluster B protein ATEG_07663</fullName>
    </alternativeName>
</protein>
<keyword id="KW-0378">Hydrolase</keyword>
<keyword id="KW-1185">Reference proteome</keyword>
<reference key="1">
    <citation type="submission" date="2005-09" db="EMBL/GenBank/DDBJ databases">
        <title>Annotation of the Aspergillus terreus NIH2624 genome.</title>
        <authorList>
            <person name="Birren B.W."/>
            <person name="Lander E.S."/>
            <person name="Galagan J.E."/>
            <person name="Nusbaum C."/>
            <person name="Devon K."/>
            <person name="Henn M."/>
            <person name="Ma L.-J."/>
            <person name="Jaffe D.B."/>
            <person name="Butler J."/>
            <person name="Alvarez P."/>
            <person name="Gnerre S."/>
            <person name="Grabherr M."/>
            <person name="Kleber M."/>
            <person name="Mauceli E.W."/>
            <person name="Brockman W."/>
            <person name="Rounsley S."/>
            <person name="Young S.K."/>
            <person name="LaButti K."/>
            <person name="Pushparaj V."/>
            <person name="DeCaprio D."/>
            <person name="Crawford M."/>
            <person name="Koehrsen M."/>
            <person name="Engels R."/>
            <person name="Montgomery P."/>
            <person name="Pearson M."/>
            <person name="Howarth C."/>
            <person name="Larson L."/>
            <person name="Luoma S."/>
            <person name="White J."/>
            <person name="Alvarado L."/>
            <person name="Kodira C.D."/>
            <person name="Zeng Q."/>
            <person name="Oleary S."/>
            <person name="Yandava C."/>
            <person name="Denning D.W."/>
            <person name="Nierman W.C."/>
            <person name="Milne T."/>
            <person name="Madden K."/>
        </authorList>
    </citation>
    <scope>NUCLEOTIDE SEQUENCE [LARGE SCALE GENOMIC DNA]</scope>
    <source>
        <strain>NIH 2624 / FGSC A1156</strain>
    </source>
</reference>
<reference key="2">
    <citation type="journal article" date="2014" name="Chem. Biol.">
        <title>Aryl-aldehyde formation in fungal polyketides: discovery and characterization of a distinct biosynthetic mechanism.</title>
        <authorList>
            <person name="Wang M."/>
            <person name="Beissner M."/>
            <person name="Zhao H."/>
        </authorList>
    </citation>
    <scope>FUNCTION</scope>
</reference>
<reference key="3">
    <citation type="journal article" date="2013" name="J. Am. Chem. Soc.">
        <title>An efficient system for heterologous expression of secondary metabolite genes in Aspergillus nidulans.</title>
        <authorList>
            <person name="Chiang Y.M."/>
            <person name="Oakley C.E."/>
            <person name="Ahuja M."/>
            <person name="Entwistle R."/>
            <person name="Schultz A."/>
            <person name="Chang S.L."/>
            <person name="Sung C.T."/>
            <person name="Wang C.C."/>
            <person name="Oakley B.R."/>
        </authorList>
    </citation>
    <scope>FUNCTION</scope>
</reference>
<reference key="4">
    <citation type="journal article" date="2020" name="Angew. Chem. Int. Ed.">
        <title>Collaborative biosynthesis of a class of bioactive azaphilones by two separate gene clusters containing four PKS/NRPSs with transcriptional cosstalk in fungi.</title>
        <authorList>
            <person name="Huang X."/>
            <person name="Zhang W."/>
            <person name="Tang S."/>
            <person name="Wei S."/>
            <person name="Lu X."/>
        </authorList>
    </citation>
    <scope>FUNCTION</scope>
    <scope>INDUCTION</scope>
    <scope>DISRUPTION PHENOTYPE</scope>
    <scope>BIOTECHNOLOGY</scope>
</reference>
<organism>
    <name type="scientific">Aspergillus terreus (strain NIH 2624 / FGSC A1156)</name>
    <dbReference type="NCBI Taxonomy" id="341663"/>
    <lineage>
        <taxon>Eukaryota</taxon>
        <taxon>Fungi</taxon>
        <taxon>Dikarya</taxon>
        <taxon>Ascomycota</taxon>
        <taxon>Pezizomycotina</taxon>
        <taxon>Eurotiomycetes</taxon>
        <taxon>Eurotiomycetidae</taxon>
        <taxon>Eurotiales</taxon>
        <taxon>Aspergillaceae</taxon>
        <taxon>Aspergillus</taxon>
        <taxon>Aspergillus subgen. Circumdati</taxon>
    </lineage>
</organism>